<feature type="chain" id="PRO_1000130622" description="Nucleotide-binding protein YajQ">
    <location>
        <begin position="1"/>
        <end position="163"/>
    </location>
</feature>
<evidence type="ECO:0000255" key="1">
    <source>
        <dbReference type="HAMAP-Rule" id="MF_00632"/>
    </source>
</evidence>
<name>YAJQ_ECOLU</name>
<sequence>MPSFDIVSEVDLQEARNAVDNASREVESRFDFRNVEASFELNDASKTIKVLSESDFQVNQLLDILRAKLLKRGIEGSSLDVPENIVHSGKTWFVEAKLKQGIESATQKKIVKMIKDSKLKVQAQIQGDEIRVTGKSRDDLQAVMAMVRGGDLGQPFQFKNFRD</sequence>
<organism>
    <name type="scientific">Escherichia coli O17:K52:H18 (strain UMN026 / ExPEC)</name>
    <dbReference type="NCBI Taxonomy" id="585056"/>
    <lineage>
        <taxon>Bacteria</taxon>
        <taxon>Pseudomonadati</taxon>
        <taxon>Pseudomonadota</taxon>
        <taxon>Gammaproteobacteria</taxon>
        <taxon>Enterobacterales</taxon>
        <taxon>Enterobacteriaceae</taxon>
        <taxon>Escherichia</taxon>
    </lineage>
</organism>
<dbReference type="EMBL" id="CU928163">
    <property type="protein sequence ID" value="CAR11680.1"/>
    <property type="molecule type" value="Genomic_DNA"/>
</dbReference>
<dbReference type="RefSeq" id="WP_001138904.1">
    <property type="nucleotide sequence ID" value="NC_011751.1"/>
</dbReference>
<dbReference type="RefSeq" id="YP_002411228.1">
    <property type="nucleotide sequence ID" value="NC_011751.1"/>
</dbReference>
<dbReference type="SMR" id="B7N8X9"/>
<dbReference type="STRING" id="585056.ECUMN_0465"/>
<dbReference type="GeneID" id="93777034"/>
<dbReference type="KEGG" id="eum:ECUMN_0465"/>
<dbReference type="PATRIC" id="fig|585056.7.peg.669"/>
<dbReference type="HOGENOM" id="CLU_099839_1_0_6"/>
<dbReference type="Proteomes" id="UP000007097">
    <property type="component" value="Chromosome"/>
</dbReference>
<dbReference type="GO" id="GO:0005829">
    <property type="term" value="C:cytosol"/>
    <property type="evidence" value="ECO:0007669"/>
    <property type="project" value="TreeGrafter"/>
</dbReference>
<dbReference type="GO" id="GO:0000166">
    <property type="term" value="F:nucleotide binding"/>
    <property type="evidence" value="ECO:0007669"/>
    <property type="project" value="TreeGrafter"/>
</dbReference>
<dbReference type="CDD" id="cd11740">
    <property type="entry name" value="YajQ_like"/>
    <property type="match status" value="1"/>
</dbReference>
<dbReference type="FunFam" id="3.30.70.860:FF:000001">
    <property type="entry name" value="UPF0234 protein YajQ"/>
    <property type="match status" value="1"/>
</dbReference>
<dbReference type="FunFam" id="3.30.70.990:FF:000001">
    <property type="entry name" value="UPF0234 protein YajQ"/>
    <property type="match status" value="1"/>
</dbReference>
<dbReference type="Gene3D" id="3.30.70.860">
    <property type="match status" value="1"/>
</dbReference>
<dbReference type="Gene3D" id="3.30.70.990">
    <property type="entry name" value="YajQ-like, domain 2"/>
    <property type="match status" value="1"/>
</dbReference>
<dbReference type="HAMAP" id="MF_00632">
    <property type="entry name" value="YajQ"/>
    <property type="match status" value="1"/>
</dbReference>
<dbReference type="InterPro" id="IPR007551">
    <property type="entry name" value="DUF520"/>
</dbReference>
<dbReference type="InterPro" id="IPR035571">
    <property type="entry name" value="UPF0234-like_C"/>
</dbReference>
<dbReference type="InterPro" id="IPR035570">
    <property type="entry name" value="UPF0234_N"/>
</dbReference>
<dbReference type="InterPro" id="IPR036183">
    <property type="entry name" value="YajQ-like_sf"/>
</dbReference>
<dbReference type="NCBIfam" id="NF003819">
    <property type="entry name" value="PRK05412.1"/>
    <property type="match status" value="1"/>
</dbReference>
<dbReference type="PANTHER" id="PTHR30476">
    <property type="entry name" value="UPF0234 PROTEIN YAJQ"/>
    <property type="match status" value="1"/>
</dbReference>
<dbReference type="PANTHER" id="PTHR30476:SF0">
    <property type="entry name" value="UPF0234 PROTEIN YAJQ"/>
    <property type="match status" value="1"/>
</dbReference>
<dbReference type="Pfam" id="PF04461">
    <property type="entry name" value="DUF520"/>
    <property type="match status" value="1"/>
</dbReference>
<dbReference type="SUPFAM" id="SSF89963">
    <property type="entry name" value="YajQ-like"/>
    <property type="match status" value="2"/>
</dbReference>
<proteinExistence type="inferred from homology"/>
<comment type="function">
    <text evidence="1">Nucleotide-binding protein.</text>
</comment>
<comment type="similarity">
    <text evidence="1">Belongs to the YajQ family.</text>
</comment>
<gene>
    <name evidence="1" type="primary">yajQ</name>
    <name type="ordered locus">ECUMN_0465</name>
</gene>
<keyword id="KW-0547">Nucleotide-binding</keyword>
<accession>B7N8X9</accession>
<protein>
    <recommendedName>
        <fullName evidence="1">Nucleotide-binding protein YajQ</fullName>
    </recommendedName>
</protein>
<reference key="1">
    <citation type="journal article" date="2009" name="PLoS Genet.">
        <title>Organised genome dynamics in the Escherichia coli species results in highly diverse adaptive paths.</title>
        <authorList>
            <person name="Touchon M."/>
            <person name="Hoede C."/>
            <person name="Tenaillon O."/>
            <person name="Barbe V."/>
            <person name="Baeriswyl S."/>
            <person name="Bidet P."/>
            <person name="Bingen E."/>
            <person name="Bonacorsi S."/>
            <person name="Bouchier C."/>
            <person name="Bouvet O."/>
            <person name="Calteau A."/>
            <person name="Chiapello H."/>
            <person name="Clermont O."/>
            <person name="Cruveiller S."/>
            <person name="Danchin A."/>
            <person name="Diard M."/>
            <person name="Dossat C."/>
            <person name="Karoui M.E."/>
            <person name="Frapy E."/>
            <person name="Garry L."/>
            <person name="Ghigo J.M."/>
            <person name="Gilles A.M."/>
            <person name="Johnson J."/>
            <person name="Le Bouguenec C."/>
            <person name="Lescat M."/>
            <person name="Mangenot S."/>
            <person name="Martinez-Jehanne V."/>
            <person name="Matic I."/>
            <person name="Nassif X."/>
            <person name="Oztas S."/>
            <person name="Petit M.A."/>
            <person name="Pichon C."/>
            <person name="Rouy Z."/>
            <person name="Ruf C.S."/>
            <person name="Schneider D."/>
            <person name="Tourret J."/>
            <person name="Vacherie B."/>
            <person name="Vallenet D."/>
            <person name="Medigue C."/>
            <person name="Rocha E.P.C."/>
            <person name="Denamur E."/>
        </authorList>
    </citation>
    <scope>NUCLEOTIDE SEQUENCE [LARGE SCALE GENOMIC DNA]</scope>
    <source>
        <strain>UMN026 / ExPEC</strain>
    </source>
</reference>